<gene>
    <name type="primary">APC1</name>
    <name type="ordered locus">YNL172W</name>
    <name type="ORF">N1677</name>
</gene>
<accession>P53886</accession>
<accession>D6W112</accession>
<organism>
    <name type="scientific">Saccharomyces cerevisiae (strain ATCC 204508 / S288c)</name>
    <name type="common">Baker's yeast</name>
    <dbReference type="NCBI Taxonomy" id="559292"/>
    <lineage>
        <taxon>Eukaryota</taxon>
        <taxon>Fungi</taxon>
        <taxon>Dikarya</taxon>
        <taxon>Ascomycota</taxon>
        <taxon>Saccharomycotina</taxon>
        <taxon>Saccharomycetes</taxon>
        <taxon>Saccharomycetales</taxon>
        <taxon>Saccharomycetaceae</taxon>
        <taxon>Saccharomyces</taxon>
    </lineage>
</organism>
<proteinExistence type="evidence at protein level"/>
<reference key="1">
    <citation type="journal article" date="1997" name="Nature">
        <title>The nucleotide sequence of Saccharomyces cerevisiae chromosome XIV and its evolutionary implications.</title>
        <authorList>
            <person name="Philippsen P."/>
            <person name="Kleine K."/>
            <person name="Poehlmann R."/>
            <person name="Duesterhoeft A."/>
            <person name="Hamberg K."/>
            <person name="Hegemann J.H."/>
            <person name="Obermaier B."/>
            <person name="Urrestarazu L.A."/>
            <person name="Aert R."/>
            <person name="Albermann K."/>
            <person name="Altmann R."/>
            <person name="Andre B."/>
            <person name="Baladron V."/>
            <person name="Ballesta J.P.G."/>
            <person name="Becam A.-M."/>
            <person name="Beinhauer J.D."/>
            <person name="Boskovic J."/>
            <person name="Buitrago M.J."/>
            <person name="Bussereau F."/>
            <person name="Coster F."/>
            <person name="Crouzet M."/>
            <person name="D'Angelo M."/>
            <person name="Dal Pero F."/>
            <person name="De Antoni A."/>
            <person name="del Rey F."/>
            <person name="Doignon F."/>
            <person name="Domdey H."/>
            <person name="Dubois E."/>
            <person name="Fiedler T.A."/>
            <person name="Fleig U."/>
            <person name="Floeth M."/>
            <person name="Fritz C."/>
            <person name="Gaillardin C."/>
            <person name="Garcia-Cantalejo J.M."/>
            <person name="Glansdorff N."/>
            <person name="Goffeau A."/>
            <person name="Gueldener U."/>
            <person name="Herbert C.J."/>
            <person name="Heumann K."/>
            <person name="Heuss-Neitzel D."/>
            <person name="Hilbert H."/>
            <person name="Hinni K."/>
            <person name="Iraqui Houssaini I."/>
            <person name="Jacquet M."/>
            <person name="Jimenez A."/>
            <person name="Jonniaux J.-L."/>
            <person name="Karpfinger-Hartl L."/>
            <person name="Lanfranchi G."/>
            <person name="Lepingle A."/>
            <person name="Levesque H."/>
            <person name="Lyck R."/>
            <person name="Maftahi M."/>
            <person name="Mallet L."/>
            <person name="Maurer C.T.C."/>
            <person name="Messenguy F."/>
            <person name="Mewes H.-W."/>
            <person name="Moestl D."/>
            <person name="Nasr F."/>
            <person name="Nicaud J.-M."/>
            <person name="Niedenthal R.K."/>
            <person name="Pandolfo D."/>
            <person name="Pierard A."/>
            <person name="Piravandi E."/>
            <person name="Planta R.J."/>
            <person name="Pohl T.M."/>
            <person name="Purnelle B."/>
            <person name="Rebischung C."/>
            <person name="Remacha M.A."/>
            <person name="Revuelta J.L."/>
            <person name="Rinke M."/>
            <person name="Saiz J.E."/>
            <person name="Sartorello F."/>
            <person name="Scherens B."/>
            <person name="Sen-Gupta M."/>
            <person name="Soler-Mira A."/>
            <person name="Urbanus J.H.M."/>
            <person name="Valle G."/>
            <person name="Van Dyck L."/>
            <person name="Verhasselt P."/>
            <person name="Vierendeels F."/>
            <person name="Vissers S."/>
            <person name="Voet M."/>
            <person name="Volckaert G."/>
            <person name="Wach A."/>
            <person name="Wambutt R."/>
            <person name="Wedler H."/>
            <person name="Zollner A."/>
            <person name="Hani J."/>
        </authorList>
    </citation>
    <scope>NUCLEOTIDE SEQUENCE [LARGE SCALE GENOMIC DNA]</scope>
    <source>
        <strain>ATCC 204508 / S288c</strain>
    </source>
</reference>
<reference key="2">
    <citation type="journal article" date="2014" name="G3 (Bethesda)">
        <title>The reference genome sequence of Saccharomyces cerevisiae: Then and now.</title>
        <authorList>
            <person name="Engel S.R."/>
            <person name="Dietrich F.S."/>
            <person name="Fisk D.G."/>
            <person name="Binkley G."/>
            <person name="Balakrishnan R."/>
            <person name="Costanzo M.C."/>
            <person name="Dwight S.S."/>
            <person name="Hitz B.C."/>
            <person name="Karra K."/>
            <person name="Nash R.S."/>
            <person name="Weng S."/>
            <person name="Wong E.D."/>
            <person name="Lloyd P."/>
            <person name="Skrzypek M.S."/>
            <person name="Miyasato S.R."/>
            <person name="Simison M."/>
            <person name="Cherry J.M."/>
        </authorList>
    </citation>
    <scope>GENOME REANNOTATION</scope>
    <scope>SEQUENCE REVISION TO 1547</scope>
    <source>
        <strain>ATCC 204508 / S288c</strain>
    </source>
</reference>
<reference key="3">
    <citation type="journal article" date="1996" name="Science">
        <title>Identification of subunits of the anaphase-promoting complex of Saccharomyces cerevisiae.</title>
        <authorList>
            <person name="Zachariae W."/>
            <person name="Shin T.H."/>
            <person name="Galova M."/>
            <person name="Obermaier B."/>
            <person name="Nasmyth K."/>
        </authorList>
    </citation>
    <scope>FUNCTION</scope>
    <scope>SUBUNIT</scope>
</reference>
<reference key="4">
    <citation type="journal article" date="2003" name="J. Biol. Chem.">
        <title>Mnd2 and Swm1 are core subunits of the Saccharomyces cerevisiae anaphase-promoting complex.</title>
        <authorList>
            <person name="Hall M.C."/>
            <person name="Torres M.P."/>
            <person name="Schroeder G.K."/>
            <person name="Borchers C.H."/>
        </authorList>
    </citation>
    <scope>FUNCTION</scope>
    <scope>SUBUNIT</scope>
    <scope>INTERACTION WITH MND2</scope>
</reference>
<reference key="5">
    <citation type="journal article" date="2003" name="Nature">
        <title>Global analysis of protein localization in budding yeast.</title>
        <authorList>
            <person name="Huh W.-K."/>
            <person name="Falvo J.V."/>
            <person name="Gerke L.C."/>
            <person name="Carroll A.S."/>
            <person name="Howson R.W."/>
            <person name="Weissman J.S."/>
            <person name="O'Shea E.K."/>
        </authorList>
    </citation>
    <scope>SUBCELLULAR LOCATION [LARGE SCALE ANALYSIS]</scope>
</reference>
<reference key="6">
    <citation type="journal article" date="2003" name="Nature">
        <title>Global analysis of protein expression in yeast.</title>
        <authorList>
            <person name="Ghaemmaghami S."/>
            <person name="Huh W.-K."/>
            <person name="Bower K."/>
            <person name="Howson R.W."/>
            <person name="Belle A."/>
            <person name="Dephoure N."/>
            <person name="O'Shea E.K."/>
            <person name="Weissman J.S."/>
        </authorList>
    </citation>
    <scope>LEVEL OF PROTEIN EXPRESSION [LARGE SCALE ANALYSIS]</scope>
</reference>
<reference key="7">
    <citation type="journal article" date="2008" name="Mol. Cell. Proteomics">
        <title>A multidimensional chromatography technology for in-depth phosphoproteome analysis.</title>
        <authorList>
            <person name="Albuquerque C.P."/>
            <person name="Smolka M.B."/>
            <person name="Payne S.H."/>
            <person name="Bafna V."/>
            <person name="Eng J."/>
            <person name="Zhou H."/>
        </authorList>
    </citation>
    <scope>IDENTIFICATION BY MASS SPECTROMETRY [LARGE SCALE ANALYSIS]</scope>
</reference>
<reference key="8">
    <citation type="journal article" date="2009" name="Science">
        <title>Global analysis of Cdk1 substrate phosphorylation sites provides insights into evolution.</title>
        <authorList>
            <person name="Holt L.J."/>
            <person name="Tuch B.B."/>
            <person name="Villen J."/>
            <person name="Johnson A.D."/>
            <person name="Gygi S.P."/>
            <person name="Morgan D.O."/>
        </authorList>
    </citation>
    <scope>PHOSPHORYLATION [LARGE SCALE ANALYSIS] AT SER-1462</scope>
    <scope>IDENTIFICATION BY MASS SPECTROMETRY [LARGE SCALE ANALYSIS]</scope>
</reference>
<evidence type="ECO:0000256" key="1">
    <source>
        <dbReference type="SAM" id="MobiDB-lite"/>
    </source>
</evidence>
<evidence type="ECO:0000269" key="2">
    <source>
    </source>
</evidence>
<evidence type="ECO:0000269" key="3">
    <source>
    </source>
</evidence>
<evidence type="ECO:0000269" key="4">
    <source>
    </source>
</evidence>
<evidence type="ECO:0000269" key="5">
    <source>
    </source>
</evidence>
<evidence type="ECO:0000305" key="6"/>
<evidence type="ECO:0007744" key="7">
    <source>
    </source>
</evidence>
<evidence type="ECO:0007829" key="8">
    <source>
        <dbReference type="PDB" id="8A3T"/>
    </source>
</evidence>
<feature type="chain" id="PRO_0000215875" description="Anaphase-promoting complex subunit 1">
    <location>
        <begin position="1"/>
        <end position="1748"/>
    </location>
</feature>
<feature type="region of interest" description="Disordered" evidence="1">
    <location>
        <begin position="1"/>
        <end position="24"/>
    </location>
</feature>
<feature type="region of interest" description="Disordered" evidence="1">
    <location>
        <begin position="1435"/>
        <end position="1479"/>
    </location>
</feature>
<feature type="compositionally biased region" description="Polar residues" evidence="1">
    <location>
        <begin position="1435"/>
        <end position="1450"/>
    </location>
</feature>
<feature type="compositionally biased region" description="Basic and acidic residues" evidence="1">
    <location>
        <begin position="1451"/>
        <end position="1468"/>
    </location>
</feature>
<feature type="modified residue" description="Phosphoserine" evidence="7">
    <location>
        <position position="1462"/>
    </location>
</feature>
<feature type="sequence conflict" description="In Ref. 1; CAA96060." evidence="6" ref="1">
    <original>M</original>
    <variation>I</variation>
    <location>
        <position position="1547"/>
    </location>
</feature>
<feature type="strand" evidence="8">
    <location>
        <begin position="53"/>
        <end position="55"/>
    </location>
</feature>
<feature type="strand" evidence="8">
    <location>
        <begin position="58"/>
        <end position="61"/>
    </location>
</feature>
<feature type="strand" evidence="8">
    <location>
        <begin position="64"/>
        <end position="67"/>
    </location>
</feature>
<feature type="strand" evidence="8">
    <location>
        <begin position="81"/>
        <end position="83"/>
    </location>
</feature>
<feature type="strand" evidence="8">
    <location>
        <begin position="86"/>
        <end position="90"/>
    </location>
</feature>
<feature type="strand" evidence="8">
    <location>
        <begin position="92"/>
        <end position="103"/>
    </location>
</feature>
<feature type="strand" evidence="8">
    <location>
        <begin position="105"/>
        <end position="109"/>
    </location>
</feature>
<feature type="strand" evidence="8">
    <location>
        <begin position="114"/>
        <end position="120"/>
    </location>
</feature>
<feature type="strand" evidence="8">
    <location>
        <begin position="123"/>
        <end position="128"/>
    </location>
</feature>
<feature type="strand" evidence="8">
    <location>
        <begin position="152"/>
        <end position="160"/>
    </location>
</feature>
<feature type="strand" evidence="8">
    <location>
        <begin position="163"/>
        <end position="168"/>
    </location>
</feature>
<feature type="strand" evidence="8">
    <location>
        <begin position="190"/>
        <end position="193"/>
    </location>
</feature>
<feature type="strand" evidence="8">
    <location>
        <begin position="197"/>
        <end position="199"/>
    </location>
</feature>
<feature type="strand" evidence="8">
    <location>
        <begin position="203"/>
        <end position="207"/>
    </location>
</feature>
<feature type="turn" evidence="8">
    <location>
        <begin position="208"/>
        <end position="211"/>
    </location>
</feature>
<feature type="strand" evidence="8">
    <location>
        <begin position="212"/>
        <end position="216"/>
    </location>
</feature>
<feature type="strand" evidence="8">
    <location>
        <begin position="368"/>
        <end position="379"/>
    </location>
</feature>
<feature type="helix" evidence="8">
    <location>
        <begin position="391"/>
        <end position="397"/>
    </location>
</feature>
<feature type="strand" evidence="8">
    <location>
        <begin position="398"/>
        <end position="405"/>
    </location>
</feature>
<feature type="strand" evidence="8">
    <location>
        <begin position="408"/>
        <end position="415"/>
    </location>
</feature>
<feature type="turn" evidence="8">
    <location>
        <begin position="416"/>
        <end position="419"/>
    </location>
</feature>
<feature type="strand" evidence="8">
    <location>
        <begin position="420"/>
        <end position="427"/>
    </location>
</feature>
<feature type="helix" evidence="8">
    <location>
        <begin position="430"/>
        <end position="434"/>
    </location>
</feature>
<feature type="helix" evidence="8">
    <location>
        <begin position="436"/>
        <end position="441"/>
    </location>
</feature>
<feature type="turn" evidence="8">
    <location>
        <begin position="446"/>
        <end position="448"/>
    </location>
</feature>
<feature type="strand" evidence="8">
    <location>
        <begin position="450"/>
        <end position="452"/>
    </location>
</feature>
<feature type="helix" evidence="8">
    <location>
        <begin position="459"/>
        <end position="461"/>
    </location>
</feature>
<feature type="strand" evidence="8">
    <location>
        <begin position="462"/>
        <end position="467"/>
    </location>
</feature>
<feature type="strand" evidence="8">
    <location>
        <begin position="469"/>
        <end position="471"/>
    </location>
</feature>
<feature type="strand" evidence="8">
    <location>
        <begin position="476"/>
        <end position="483"/>
    </location>
</feature>
<feature type="strand" evidence="8">
    <location>
        <begin position="486"/>
        <end position="492"/>
    </location>
</feature>
<feature type="strand" evidence="8">
    <location>
        <begin position="494"/>
        <end position="496"/>
    </location>
</feature>
<feature type="strand" evidence="8">
    <location>
        <begin position="499"/>
        <end position="505"/>
    </location>
</feature>
<feature type="helix" evidence="8">
    <location>
        <begin position="508"/>
        <end position="510"/>
    </location>
</feature>
<feature type="helix" evidence="8">
    <location>
        <begin position="512"/>
        <end position="514"/>
    </location>
</feature>
<feature type="helix" evidence="8">
    <location>
        <begin position="515"/>
        <end position="519"/>
    </location>
</feature>
<feature type="strand" evidence="8">
    <location>
        <begin position="527"/>
        <end position="529"/>
    </location>
</feature>
<feature type="helix" evidence="8">
    <location>
        <begin position="530"/>
        <end position="540"/>
    </location>
</feature>
<feature type="helix" evidence="8">
    <location>
        <begin position="543"/>
        <end position="563"/>
    </location>
</feature>
<feature type="helix" evidence="8">
    <location>
        <begin position="572"/>
        <end position="587"/>
    </location>
</feature>
<feature type="helix" evidence="8">
    <location>
        <begin position="596"/>
        <end position="600"/>
    </location>
</feature>
<feature type="helix" evidence="8">
    <location>
        <begin position="602"/>
        <end position="605"/>
    </location>
</feature>
<feature type="helix" evidence="8">
    <location>
        <begin position="608"/>
        <end position="615"/>
    </location>
</feature>
<feature type="helix" evidence="8">
    <location>
        <begin position="617"/>
        <end position="638"/>
    </location>
</feature>
<feature type="helix" evidence="8">
    <location>
        <begin position="642"/>
        <end position="644"/>
    </location>
</feature>
<feature type="helix" evidence="8">
    <location>
        <begin position="645"/>
        <end position="662"/>
    </location>
</feature>
<feature type="helix" evidence="8">
    <location>
        <begin position="666"/>
        <end position="670"/>
    </location>
</feature>
<feature type="helix" evidence="8">
    <location>
        <begin position="703"/>
        <end position="709"/>
    </location>
</feature>
<feature type="turn" evidence="8">
    <location>
        <begin position="724"/>
        <end position="729"/>
    </location>
</feature>
<feature type="helix" evidence="8">
    <location>
        <begin position="732"/>
        <end position="736"/>
    </location>
</feature>
<feature type="helix" evidence="8">
    <location>
        <begin position="740"/>
        <end position="752"/>
    </location>
</feature>
<feature type="helix" evidence="8">
    <location>
        <begin position="761"/>
        <end position="768"/>
    </location>
</feature>
<feature type="helix" evidence="8">
    <location>
        <begin position="773"/>
        <end position="776"/>
    </location>
</feature>
<feature type="helix" evidence="8">
    <location>
        <begin position="784"/>
        <end position="797"/>
    </location>
</feature>
<feature type="helix" evidence="8">
    <location>
        <begin position="805"/>
        <end position="807"/>
    </location>
</feature>
<feature type="helix" evidence="8">
    <location>
        <begin position="811"/>
        <end position="825"/>
    </location>
</feature>
<feature type="helix" evidence="8">
    <location>
        <begin position="860"/>
        <end position="871"/>
    </location>
</feature>
<feature type="helix" evidence="8">
    <location>
        <begin position="894"/>
        <end position="905"/>
    </location>
</feature>
<feature type="strand" evidence="8">
    <location>
        <begin position="908"/>
        <end position="910"/>
    </location>
</feature>
<feature type="helix" evidence="8">
    <location>
        <begin position="911"/>
        <end position="919"/>
    </location>
</feature>
<feature type="strand" evidence="8">
    <location>
        <begin position="921"/>
        <end position="923"/>
    </location>
</feature>
<feature type="helix" evidence="8">
    <location>
        <begin position="936"/>
        <end position="964"/>
    </location>
</feature>
<feature type="strand" evidence="8">
    <location>
        <begin position="973"/>
        <end position="975"/>
    </location>
</feature>
<feature type="strand" evidence="8">
    <location>
        <begin position="985"/>
        <end position="987"/>
    </location>
</feature>
<feature type="turn" evidence="8">
    <location>
        <begin position="998"/>
        <end position="1000"/>
    </location>
</feature>
<feature type="helix" evidence="8">
    <location>
        <begin position="1004"/>
        <end position="1020"/>
    </location>
</feature>
<feature type="helix" evidence="8">
    <location>
        <begin position="1031"/>
        <end position="1036"/>
    </location>
</feature>
<feature type="helix" evidence="8">
    <location>
        <begin position="1044"/>
        <end position="1055"/>
    </location>
</feature>
<feature type="helix" evidence="8">
    <location>
        <begin position="1064"/>
        <end position="1071"/>
    </location>
</feature>
<feature type="helix" evidence="8">
    <location>
        <begin position="1076"/>
        <end position="1090"/>
    </location>
</feature>
<feature type="helix" evidence="8">
    <location>
        <begin position="1096"/>
        <end position="1105"/>
    </location>
</feature>
<feature type="turn" evidence="8">
    <location>
        <begin position="1107"/>
        <end position="1109"/>
    </location>
</feature>
<feature type="helix" evidence="8">
    <location>
        <begin position="1121"/>
        <end position="1134"/>
    </location>
</feature>
<feature type="turn" evidence="8">
    <location>
        <begin position="1135"/>
        <end position="1137"/>
    </location>
</feature>
<feature type="helix" evidence="8">
    <location>
        <begin position="1141"/>
        <end position="1152"/>
    </location>
</feature>
<feature type="strand" evidence="8">
    <location>
        <begin position="1155"/>
        <end position="1157"/>
    </location>
</feature>
<feature type="strand" evidence="8">
    <location>
        <begin position="1160"/>
        <end position="1162"/>
    </location>
</feature>
<feature type="helix" evidence="8">
    <location>
        <begin position="1165"/>
        <end position="1178"/>
    </location>
</feature>
<feature type="turn" evidence="8">
    <location>
        <begin position="1179"/>
        <end position="1181"/>
    </location>
</feature>
<feature type="helix" evidence="8">
    <location>
        <begin position="1212"/>
        <end position="1229"/>
    </location>
</feature>
<feature type="strand" evidence="8">
    <location>
        <begin position="1237"/>
        <end position="1239"/>
    </location>
</feature>
<feature type="helix" evidence="8">
    <location>
        <begin position="1243"/>
        <end position="1254"/>
    </location>
</feature>
<feature type="turn" evidence="8">
    <location>
        <begin position="1255"/>
        <end position="1257"/>
    </location>
</feature>
<feature type="helix" evidence="8">
    <location>
        <begin position="1261"/>
        <end position="1267"/>
    </location>
</feature>
<feature type="helix" evidence="8">
    <location>
        <begin position="1271"/>
        <end position="1276"/>
    </location>
</feature>
<feature type="helix" evidence="8">
    <location>
        <begin position="1284"/>
        <end position="1296"/>
    </location>
</feature>
<feature type="helix" evidence="8">
    <location>
        <begin position="1305"/>
        <end position="1308"/>
    </location>
</feature>
<feature type="turn" evidence="8">
    <location>
        <begin position="1309"/>
        <end position="1311"/>
    </location>
</feature>
<feature type="helix" evidence="8">
    <location>
        <begin position="1323"/>
        <end position="1325"/>
    </location>
</feature>
<feature type="helix" evidence="8">
    <location>
        <begin position="1326"/>
        <end position="1342"/>
    </location>
</feature>
<feature type="helix" evidence="8">
    <location>
        <begin position="1350"/>
        <end position="1362"/>
    </location>
</feature>
<feature type="turn" evidence="8">
    <location>
        <begin position="1364"/>
        <end position="1367"/>
    </location>
</feature>
<feature type="helix" evidence="8">
    <location>
        <begin position="1374"/>
        <end position="1397"/>
    </location>
</feature>
<feature type="turn" evidence="8">
    <location>
        <begin position="1398"/>
        <end position="1400"/>
    </location>
</feature>
<feature type="helix" evidence="8">
    <location>
        <begin position="1404"/>
        <end position="1414"/>
    </location>
</feature>
<feature type="strand" evidence="8">
    <location>
        <begin position="1419"/>
        <end position="1422"/>
    </location>
</feature>
<feature type="helix" evidence="8">
    <location>
        <begin position="1476"/>
        <end position="1504"/>
    </location>
</feature>
<feature type="helix" evidence="8">
    <location>
        <begin position="1507"/>
        <end position="1509"/>
    </location>
</feature>
<feature type="strand" evidence="8">
    <location>
        <begin position="1511"/>
        <end position="1513"/>
    </location>
</feature>
<feature type="helix" evidence="8">
    <location>
        <begin position="1518"/>
        <end position="1527"/>
    </location>
</feature>
<feature type="helix" evidence="8">
    <location>
        <begin position="1539"/>
        <end position="1542"/>
    </location>
</feature>
<feature type="helix" evidence="8">
    <location>
        <begin position="1545"/>
        <end position="1547"/>
    </location>
</feature>
<feature type="strand" evidence="8">
    <location>
        <begin position="1548"/>
        <end position="1551"/>
    </location>
</feature>
<feature type="strand" evidence="8">
    <location>
        <begin position="1553"/>
        <end position="1561"/>
    </location>
</feature>
<feature type="strand" evidence="8">
    <location>
        <begin position="1570"/>
        <end position="1573"/>
    </location>
</feature>
<feature type="strand" evidence="8">
    <location>
        <begin position="1578"/>
        <end position="1580"/>
    </location>
</feature>
<feature type="strand" evidence="8">
    <location>
        <begin position="1584"/>
        <end position="1587"/>
    </location>
</feature>
<feature type="strand" evidence="8">
    <location>
        <begin position="1589"/>
        <end position="1592"/>
    </location>
</feature>
<feature type="helix" evidence="8">
    <location>
        <begin position="1596"/>
        <end position="1598"/>
    </location>
</feature>
<feature type="strand" evidence="8">
    <location>
        <begin position="1601"/>
        <end position="1604"/>
    </location>
</feature>
<feature type="strand" evidence="8">
    <location>
        <begin position="1607"/>
        <end position="1609"/>
    </location>
</feature>
<feature type="strand" evidence="8">
    <location>
        <begin position="1612"/>
        <end position="1615"/>
    </location>
</feature>
<feature type="strand" evidence="8">
    <location>
        <begin position="1618"/>
        <end position="1620"/>
    </location>
</feature>
<feature type="helix" evidence="8">
    <location>
        <begin position="1622"/>
        <end position="1625"/>
    </location>
</feature>
<feature type="strand" evidence="8">
    <location>
        <begin position="1630"/>
        <end position="1634"/>
    </location>
</feature>
<feature type="turn" evidence="8">
    <location>
        <begin position="1641"/>
        <end position="1643"/>
    </location>
</feature>
<feature type="strand" evidence="8">
    <location>
        <begin position="1644"/>
        <end position="1647"/>
    </location>
</feature>
<feature type="helix" evidence="8">
    <location>
        <begin position="1654"/>
        <end position="1669"/>
    </location>
</feature>
<feature type="helix" evidence="8">
    <location>
        <begin position="1682"/>
        <end position="1689"/>
    </location>
</feature>
<feature type="helix" evidence="8">
    <location>
        <begin position="1694"/>
        <end position="1703"/>
    </location>
</feature>
<feature type="helix" evidence="8">
    <location>
        <begin position="1713"/>
        <end position="1723"/>
    </location>
</feature>
<feature type="helix" evidence="8">
    <location>
        <begin position="1731"/>
        <end position="1743"/>
    </location>
</feature>
<name>APC1_YEAST</name>
<comment type="function">
    <text evidence="2 5">Component of the anaphase promoting complex/cyclosome (APC/C), a cell cycle-regulated E3 ubiquitin-protein ligase complex that controls progression through mitosis and the G1 phase of the cell cycle. The APC/C is thought to confer substrate specificity and, in the presence of ubiquitin-conjugating E2 enzymes, it catalyzes the formation of protein-ubiquitin conjugates that are subsequently degraded by the 26S proteasome. In early mitosis, the APC/C is activated by CDC20 and targets securin PDS1, the B-type cyclin CLB5, and other anaphase inhibitory proteins for proteolysis, thereby triggering the separation of sister chromatids at the metaphase-to-anaphase transition. In late mitosis and in G1, degradation of CLB5 allows activation of the APC/C by CDH1, which is needed to destroy CDC20 and the B-type cyclin CLB2 to allow exit from mitosis and creating the low CDK state necessary for cytokinesis and for reforming prereplicative complexes in G1 prior to another round of replication.</text>
</comment>
<comment type="pathway">
    <text>Protein modification; protein ubiquitination.</text>
</comment>
<comment type="subunit">
    <text evidence="2 5">The APC/C is composed of at least 13 subunits that stay tightly associated throughout the cell cycle: APC1, APC2, APC4, APC5, APC9, APC11, CDC16, CDC23, CDC26, CDC27, DOC1, MND2 and SWM1. APC1 interacts directly with MND2.</text>
</comment>
<comment type="interaction">
    <interactant intactId="EBI-29017">
        <id>P53886</id>
    </interactant>
    <interactant intactId="EBI-29017">
        <id>P53886</id>
        <label>APC1</label>
    </interactant>
    <organismsDiffer>false</organismsDiffer>
    <experiments>2</experiments>
</comment>
<comment type="interaction">
    <interactant intactId="EBI-29017">
        <id>P53886</id>
    </interactant>
    <interactant intactId="EBI-2603">
        <id>P53068</id>
        <label>DOC1</label>
    </interactant>
    <organismsDiffer>false</organismsDiffer>
    <experiments>10</experiments>
</comment>
<comment type="interaction">
    <interactant intactId="EBI-29017">
        <id>P53886</id>
    </interactant>
    <interactant intactId="EBI-25433">
        <id>P40577</id>
        <label>MND2</label>
    </interactant>
    <organismsDiffer>false</organismsDiffer>
    <experiments>4</experiments>
</comment>
<comment type="subcellular location">
    <subcellularLocation>
        <location evidence="3">Nucleus</location>
    </subcellularLocation>
    <subcellularLocation>
        <location evidence="3">Cytoplasm</location>
    </subcellularLocation>
    <subcellularLocation>
        <location evidence="3">Cytoplasm</location>
        <location evidence="3">Cytoskeleton</location>
        <location evidence="3">Spindle pole</location>
    </subcellularLocation>
</comment>
<comment type="miscellaneous">
    <text evidence="4">Present with 178 molecules/cell in log phase SD medium.</text>
</comment>
<comment type="similarity">
    <text evidence="6">Belongs to the APC1 family.</text>
</comment>
<sequence>MTSKPSTRNDYLPRETHNGEYTGDSPEWQLQINITNKIGGINGDIWLSRDGRSVKWCIEDQCLRQFTYNQKIIKAGYIDFEKTPDCFVVVLSDIAHVYMLKNGGSTTVCFPFQIGNAFWYANGVILERETSASFMDGGYDLKPIEFDLKHKYITLTDPMAPFGLISITNTFKGGINSASGNKTDILQDFQLVLFPSDKDKCIAVFLDRNSKVLRFYYSRILSSDQSRKGELTISSTKKTGLDAAGNSQKSGGISKDLRKFSHLTRRSTSINSNSHDFNAAERVLSGNVGNASGRTDIFALPSSCSRRSLSATLDRMGNNIAPTNRAAPSGFFDSSSANTATHSNITPVSQPMQQQQQEYLNQTATSSKDIVLTEISSLKLPDDIIFTSRRLSSILSKLKFLSLRFERREGLLIFHEPTHFCKIWLIDLLPDVLDSIPFKIYGNSPQNMIRLENLKLKEPSRIQAMYIHELLESCLILVSEGQNKEEYKACLYDPFVKITSPSKNISEELTKQNSLPSLQKLFPYPETSFTKLCFEAVKYITSPAFNISFIFLWQSAYSILLSRANDDVVGGLKMEHDAFSLVLSLLILPIPSSSAQEYQEYKEIYERDLFQHLKQDSEITSSVLPRIVIGLHLIREEYSLNVLCRNEHALLGQFLRFATAAMGWPDLWQSYYVPKMDSESKTFLHPREQNSTFFHPLDEPPSITKSLYSITENSSIPLCPFISFSRLVATDTQVELRITPRSFKILGLYELVHSPNFLPDYVLGILSSFKVDKDELQTYPLGILVPLQNILKILEDKLSEVRDNLELLDRADLQRCSAIINSIRSDSKEVLKRGQRDSYMLCKVPLAKNRSSLSKKPSDIYSILSEIVKSASQVPLDGSAMRMSNIQDDEDIDEGRSLKLNAGLIFSEDKRFTHVVSLLAYYRPTKTQFFTTKTEYAQILAQKKYFAKIMALRTCTNGVGWGAVAYATEKPISTQKWVIQPLNLISVFPDDTKITVKAPEDIAHDIVEWGQFHAGVSSGLRISKKATGITGSWIAFNKPKELDAYHGGFLLGLGLNGHLKNLEEWHIYNYLSPRNTHISIGLLLGMSSSMKGSMDSKLIKVISVHLVAFLPSGSSDLNIDLKLQTAGIIGMGMLYLNSRHKRMSDSIFAQLVSLLNVNDEMVADEEYRLAAGISLGLINLGAGQTKLRKWDSSLLGLGDDLPEDVYDSSDVEQNVMYEDLTTKLLEIVTSTYDVENDWIPENSQIGAVIAIMFLFLKSNNFGISNMLKVDLKEILKANINTRPELLMYREWASNMILWEFIGDDLSFIMKDVDIGVKFSELNTDLLPIYYTMAGRILAMGIRFASTGNLKIRNILLSLVDKFLPLYQYPGKQNLDFRLTISVINVLTNVIVVSLSMVMCASGDLEVLRRVKYLHEVASGPYSDLFQEIPSSKSDVSGVTQVTSNTNTPGNSDRERVDETAASLDDERSSNGSDISDPTAYLEDKKDIDDHYGKFISTNLALGFLFLGSGQYALNTSTLESIAFLSMSVLPTYTTPHPLQELKHFWSMAVEPRCLVIKDISTGDAVNNVPIELVVEEDVEKEEVIREISTPCLLPDFSKIKSIRVKMHGYFPLEVNFTKDYSASDFFSGGTIIYIQRKSESVFENKASFRNVEDIHVALKRKAAESKNYSRLNLKNEQGNTTSSQLVESLGIQDLTMVELDTLLSAGNNTALTDSESYNLGLLCSDKNSGDILDCQLELWYKSFGPHDE</sequence>
<protein>
    <recommendedName>
        <fullName>Anaphase-promoting complex subunit 1</fullName>
    </recommendedName>
</protein>
<keyword id="KW-0002">3D-structure</keyword>
<keyword id="KW-0131">Cell cycle</keyword>
<keyword id="KW-0132">Cell division</keyword>
<keyword id="KW-0963">Cytoplasm</keyword>
<keyword id="KW-0206">Cytoskeleton</keyword>
<keyword id="KW-0498">Mitosis</keyword>
<keyword id="KW-0539">Nucleus</keyword>
<keyword id="KW-0597">Phosphoprotein</keyword>
<keyword id="KW-1185">Reference proteome</keyword>
<keyword id="KW-0833">Ubl conjugation pathway</keyword>
<dbReference type="EMBL" id="Z71448">
    <property type="protein sequence ID" value="CAA96060.1"/>
    <property type="molecule type" value="Genomic_DNA"/>
</dbReference>
<dbReference type="EMBL" id="BK006947">
    <property type="protein sequence ID" value="DAA10378.2"/>
    <property type="molecule type" value="Genomic_DNA"/>
</dbReference>
<dbReference type="PIR" id="S63127">
    <property type="entry name" value="S63127"/>
</dbReference>
<dbReference type="RefSeq" id="NP_014227.4">
    <property type="nucleotide sequence ID" value="NM_001183010.4"/>
</dbReference>
<dbReference type="PDB" id="8A3T">
    <property type="method" value="EM"/>
    <property type="resolution" value="3.50 A"/>
    <property type="chains" value="C=1-1748"/>
</dbReference>
<dbReference type="PDB" id="8A5Y">
    <property type="method" value="EM"/>
    <property type="resolution" value="4.90 A"/>
    <property type="chains" value="C=1-1748"/>
</dbReference>
<dbReference type="PDB" id="8A61">
    <property type="method" value="EM"/>
    <property type="resolution" value="5.40 A"/>
    <property type="chains" value="C=1-1748"/>
</dbReference>
<dbReference type="PDBsum" id="8A3T"/>
<dbReference type="PDBsum" id="8A5Y"/>
<dbReference type="PDBsum" id="8A61"/>
<dbReference type="EMDB" id="EMD-15123"/>
<dbReference type="EMDB" id="EMD-15199"/>
<dbReference type="EMDB" id="EMD-15201"/>
<dbReference type="SMR" id="P53886"/>
<dbReference type="BioGRID" id="35658">
    <property type="interactions" value="513"/>
</dbReference>
<dbReference type="ComplexPortal" id="CPX-756">
    <property type="entry name" value="Anaphase-Promoting core complex"/>
</dbReference>
<dbReference type="ComplexPortal" id="CPX-760">
    <property type="entry name" value="Anaphase-Promoting Complex, CDC20 variant"/>
</dbReference>
<dbReference type="ComplexPortal" id="CPX-761">
    <property type="entry name" value="Anaphase-Promoting Complex, CDH1 variant"/>
</dbReference>
<dbReference type="ComplexPortal" id="CPX-762">
    <property type="entry name" value="Anaphase-Promoting complex AMA1 variant"/>
</dbReference>
<dbReference type="DIP" id="DIP-970N"/>
<dbReference type="FunCoup" id="P53886">
    <property type="interactions" value="367"/>
</dbReference>
<dbReference type="IntAct" id="P53886">
    <property type="interactions" value="14"/>
</dbReference>
<dbReference type="MINT" id="P53886"/>
<dbReference type="STRING" id="4932.YNL172W"/>
<dbReference type="iPTMnet" id="P53886"/>
<dbReference type="PaxDb" id="4932-YNL172W"/>
<dbReference type="PeptideAtlas" id="P53886"/>
<dbReference type="EnsemblFungi" id="YNL172W_mRNA">
    <property type="protein sequence ID" value="YNL172W"/>
    <property type="gene ID" value="YNL172W"/>
</dbReference>
<dbReference type="GeneID" id="855549"/>
<dbReference type="KEGG" id="sce:YNL172W"/>
<dbReference type="AGR" id="SGD:S000005116"/>
<dbReference type="SGD" id="S000005116">
    <property type="gene designation" value="APC1"/>
</dbReference>
<dbReference type="VEuPathDB" id="FungiDB:YNL172W"/>
<dbReference type="eggNOG" id="KOG1858">
    <property type="taxonomic scope" value="Eukaryota"/>
</dbReference>
<dbReference type="GeneTree" id="ENSGT00390000016757"/>
<dbReference type="HOGENOM" id="CLU_000746_0_0_1"/>
<dbReference type="InParanoid" id="P53886"/>
<dbReference type="OMA" id="LEEWHVY"/>
<dbReference type="OrthoDB" id="26401at2759"/>
<dbReference type="BioCyc" id="YEAST:G3O-33185-MONOMER"/>
<dbReference type="Reactome" id="R-SCE-983168">
    <property type="pathway name" value="Antigen processing: Ubiquitination &amp; Proteasome degradation"/>
</dbReference>
<dbReference type="UniPathway" id="UPA00143"/>
<dbReference type="BioGRID-ORCS" id="855549">
    <property type="hits" value="9 hits in 10 CRISPR screens"/>
</dbReference>
<dbReference type="PRO" id="PR:P53886"/>
<dbReference type="Proteomes" id="UP000002311">
    <property type="component" value="Chromosome XIV"/>
</dbReference>
<dbReference type="RNAct" id="P53886">
    <property type="molecule type" value="protein"/>
</dbReference>
<dbReference type="GO" id="GO:0005680">
    <property type="term" value="C:anaphase-promoting complex"/>
    <property type="evidence" value="ECO:0000314"/>
    <property type="project" value="SGD"/>
</dbReference>
<dbReference type="GO" id="GO:0005737">
    <property type="term" value="C:cytoplasm"/>
    <property type="evidence" value="ECO:0007669"/>
    <property type="project" value="UniProtKB-SubCell"/>
</dbReference>
<dbReference type="GO" id="GO:0005634">
    <property type="term" value="C:nucleus"/>
    <property type="evidence" value="ECO:0007005"/>
    <property type="project" value="SGD"/>
</dbReference>
<dbReference type="GO" id="GO:0000922">
    <property type="term" value="C:spindle pole"/>
    <property type="evidence" value="ECO:0007669"/>
    <property type="project" value="UniProtKB-SubCell"/>
</dbReference>
<dbReference type="GO" id="GO:0042802">
    <property type="term" value="F:identical protein binding"/>
    <property type="evidence" value="ECO:0000353"/>
    <property type="project" value="IntAct"/>
</dbReference>
<dbReference type="GO" id="GO:0060090">
    <property type="term" value="F:molecular adaptor activity"/>
    <property type="evidence" value="ECO:0000314"/>
    <property type="project" value="SGD"/>
</dbReference>
<dbReference type="GO" id="GO:0031145">
    <property type="term" value="P:anaphase-promoting complex-dependent catabolic process"/>
    <property type="evidence" value="ECO:0000314"/>
    <property type="project" value="ComplexPortal"/>
</dbReference>
<dbReference type="GO" id="GO:0051301">
    <property type="term" value="P:cell division"/>
    <property type="evidence" value="ECO:0007669"/>
    <property type="project" value="UniProtKB-KW"/>
</dbReference>
<dbReference type="GO" id="GO:0010458">
    <property type="term" value="P:exit from mitosis"/>
    <property type="evidence" value="ECO:0000315"/>
    <property type="project" value="SGD"/>
</dbReference>
<dbReference type="GO" id="GO:0007091">
    <property type="term" value="P:metaphase/anaphase transition of mitotic cell cycle"/>
    <property type="evidence" value="ECO:0000315"/>
    <property type="project" value="SGD"/>
</dbReference>
<dbReference type="GO" id="GO:0070979">
    <property type="term" value="P:protein K11-linked ubiquitination"/>
    <property type="evidence" value="ECO:0000318"/>
    <property type="project" value="GO_Central"/>
</dbReference>
<dbReference type="GO" id="GO:0016567">
    <property type="term" value="P:protein ubiquitination"/>
    <property type="evidence" value="ECO:0000314"/>
    <property type="project" value="ComplexPortal"/>
</dbReference>
<dbReference type="GO" id="GO:0051445">
    <property type="term" value="P:regulation of meiotic cell cycle"/>
    <property type="evidence" value="ECO:0000303"/>
    <property type="project" value="ComplexPortal"/>
</dbReference>
<dbReference type="GO" id="GO:0007346">
    <property type="term" value="P:regulation of mitotic cell cycle"/>
    <property type="evidence" value="ECO:0000303"/>
    <property type="project" value="ComplexPortal"/>
</dbReference>
<dbReference type="FunFam" id="1.25.10.10:FF:000435">
    <property type="entry name" value="Ubiquitin ligase subunit"/>
    <property type="match status" value="1"/>
</dbReference>
<dbReference type="Gene3D" id="1.25.10.10">
    <property type="entry name" value="Leucine-rich Repeat Variant"/>
    <property type="match status" value="1"/>
</dbReference>
<dbReference type="InterPro" id="IPR024990">
    <property type="entry name" value="Apc1"/>
</dbReference>
<dbReference type="InterPro" id="IPR011989">
    <property type="entry name" value="ARM-like"/>
</dbReference>
<dbReference type="PANTHER" id="PTHR12827:SF3">
    <property type="entry name" value="ANAPHASE-PROMOTING COMPLEX SUBUNIT 1"/>
    <property type="match status" value="1"/>
</dbReference>
<dbReference type="PANTHER" id="PTHR12827">
    <property type="entry name" value="MEIOTIC CHECKPOINT REGULATOR TSG24 FAMILY MEMBER"/>
    <property type="match status" value="1"/>
</dbReference>